<name>GLGA_PASMU</name>
<sequence>MKVLHACSELYPLLKTGGLADVMGALPFAQKEIGIDARIVLPAYPAIKAGIPETTVVSEFDNFAGHIVLRYGEYKGLGVYLIDAPHLYQREGNPYHDQWYNDYADNYKRFALLGWVAAELATGLDSWWHADVVHAHDWHAGLASAYLFNKGRPAKSVFTIHNLAYQGQFAYHHLVEIGLPAGMFHVDGLELHGQISYLKAGLYYSDAVTAVSPTYAKEITTPEFGYGLQGLLTTLNSQGKLVGILNGVDDQIWHPNHDAYIEHHYKLKAMTGKRKNKEALQAYFNLPQDPDALLFVMVTRLTEQKGVDLLIDSAEEIVKQGGQLTILGSGSPHLEAGILHLAQQYPHQIAVKIGYDEALSHLMIAGGDVILVPSRFEPCGLTQLYGLKYGTLPLVRATGGLADTVVNATVENIKSRLATGFVFEQANREALRQALVNAFALWQKQRLWFTVRSVAMEQDFSWQISATGYHALYQRLLSFN</sequence>
<accession>Q9CN91</accession>
<evidence type="ECO:0000255" key="1">
    <source>
        <dbReference type="HAMAP-Rule" id="MF_00484"/>
    </source>
</evidence>
<protein>
    <recommendedName>
        <fullName evidence="1">Glycogen synthase</fullName>
        <ecNumber evidence="1">2.4.1.21</ecNumber>
    </recommendedName>
    <alternativeName>
        <fullName evidence="1">Starch [bacterial glycogen] synthase</fullName>
    </alternativeName>
</protein>
<gene>
    <name evidence="1" type="primary">glgA</name>
    <name type="ordered locus">PM0544</name>
</gene>
<dbReference type="EC" id="2.4.1.21" evidence="1"/>
<dbReference type="EMBL" id="AE004439">
    <property type="protein sequence ID" value="AAK02628.1"/>
    <property type="molecule type" value="Genomic_DNA"/>
</dbReference>
<dbReference type="RefSeq" id="WP_005753940.1">
    <property type="nucleotide sequence ID" value="NC_002663.1"/>
</dbReference>
<dbReference type="SMR" id="Q9CN91"/>
<dbReference type="STRING" id="272843.PM0544"/>
<dbReference type="CAZy" id="GT5">
    <property type="family name" value="Glycosyltransferase Family 5"/>
</dbReference>
<dbReference type="EnsemblBacteria" id="AAK02628">
    <property type="protein sequence ID" value="AAK02628"/>
    <property type="gene ID" value="PM0544"/>
</dbReference>
<dbReference type="GeneID" id="77208107"/>
<dbReference type="KEGG" id="pmu:PM0544"/>
<dbReference type="PATRIC" id="fig|272843.6.peg.551"/>
<dbReference type="HOGENOM" id="CLU_009583_18_4_6"/>
<dbReference type="OrthoDB" id="9808590at2"/>
<dbReference type="UniPathway" id="UPA00164"/>
<dbReference type="Proteomes" id="UP000000809">
    <property type="component" value="Chromosome"/>
</dbReference>
<dbReference type="GO" id="GO:0005829">
    <property type="term" value="C:cytosol"/>
    <property type="evidence" value="ECO:0007669"/>
    <property type="project" value="TreeGrafter"/>
</dbReference>
<dbReference type="GO" id="GO:0009011">
    <property type="term" value="F:alpha-1,4-glucan glucosyltransferase (ADP-glucose donor) activity"/>
    <property type="evidence" value="ECO:0007669"/>
    <property type="project" value="UniProtKB-UniRule"/>
</dbReference>
<dbReference type="GO" id="GO:0004373">
    <property type="term" value="F:alpha-1,4-glucan glucosyltransferase (UDP-glucose donor) activity"/>
    <property type="evidence" value="ECO:0007669"/>
    <property type="project" value="InterPro"/>
</dbReference>
<dbReference type="GO" id="GO:0005978">
    <property type="term" value="P:glycogen biosynthetic process"/>
    <property type="evidence" value="ECO:0007669"/>
    <property type="project" value="UniProtKB-UniRule"/>
</dbReference>
<dbReference type="CDD" id="cd03791">
    <property type="entry name" value="GT5_Glycogen_synthase_DULL1-like"/>
    <property type="match status" value="1"/>
</dbReference>
<dbReference type="FunFam" id="3.40.50.2000:FF:000011">
    <property type="entry name" value="Glycogen synthase"/>
    <property type="match status" value="1"/>
</dbReference>
<dbReference type="Gene3D" id="3.40.50.2000">
    <property type="entry name" value="Glycogen Phosphorylase B"/>
    <property type="match status" value="2"/>
</dbReference>
<dbReference type="HAMAP" id="MF_00484">
    <property type="entry name" value="Glycogen_synth"/>
    <property type="match status" value="1"/>
</dbReference>
<dbReference type="InterPro" id="IPR001296">
    <property type="entry name" value="Glyco_trans_1"/>
</dbReference>
<dbReference type="InterPro" id="IPR011835">
    <property type="entry name" value="GS/SS"/>
</dbReference>
<dbReference type="InterPro" id="IPR013534">
    <property type="entry name" value="Starch_synth_cat_dom"/>
</dbReference>
<dbReference type="NCBIfam" id="TIGR02095">
    <property type="entry name" value="glgA"/>
    <property type="match status" value="1"/>
</dbReference>
<dbReference type="NCBIfam" id="NF001899">
    <property type="entry name" value="PRK00654.1-2"/>
    <property type="match status" value="1"/>
</dbReference>
<dbReference type="PANTHER" id="PTHR45825:SF11">
    <property type="entry name" value="ALPHA AMYLASE DOMAIN-CONTAINING PROTEIN"/>
    <property type="match status" value="1"/>
</dbReference>
<dbReference type="PANTHER" id="PTHR45825">
    <property type="entry name" value="GRANULE-BOUND STARCH SYNTHASE 1, CHLOROPLASTIC/AMYLOPLASTIC"/>
    <property type="match status" value="1"/>
</dbReference>
<dbReference type="Pfam" id="PF08323">
    <property type="entry name" value="Glyco_transf_5"/>
    <property type="match status" value="1"/>
</dbReference>
<dbReference type="Pfam" id="PF00534">
    <property type="entry name" value="Glycos_transf_1"/>
    <property type="match status" value="1"/>
</dbReference>
<dbReference type="SUPFAM" id="SSF53756">
    <property type="entry name" value="UDP-Glycosyltransferase/glycogen phosphorylase"/>
    <property type="match status" value="1"/>
</dbReference>
<feature type="chain" id="PRO_0000188628" description="Glycogen synthase">
    <location>
        <begin position="1"/>
        <end position="480"/>
    </location>
</feature>
<feature type="binding site" evidence="1">
    <location>
        <position position="15"/>
    </location>
    <ligand>
        <name>ADP-alpha-D-glucose</name>
        <dbReference type="ChEBI" id="CHEBI:57498"/>
    </ligand>
</feature>
<reference key="1">
    <citation type="journal article" date="2001" name="Proc. Natl. Acad. Sci. U.S.A.">
        <title>Complete genomic sequence of Pasteurella multocida Pm70.</title>
        <authorList>
            <person name="May B.J."/>
            <person name="Zhang Q."/>
            <person name="Li L.L."/>
            <person name="Paustian M.L."/>
            <person name="Whittam T.S."/>
            <person name="Kapur V."/>
        </authorList>
    </citation>
    <scope>NUCLEOTIDE SEQUENCE [LARGE SCALE GENOMIC DNA]</scope>
    <source>
        <strain>Pm70</strain>
    </source>
</reference>
<comment type="function">
    <text evidence="1">Synthesizes alpha-1,4-glucan chains using ADP-glucose.</text>
</comment>
<comment type="catalytic activity">
    <reaction evidence="1">
        <text>[(1-&gt;4)-alpha-D-glucosyl](n) + ADP-alpha-D-glucose = [(1-&gt;4)-alpha-D-glucosyl](n+1) + ADP + H(+)</text>
        <dbReference type="Rhea" id="RHEA:18189"/>
        <dbReference type="Rhea" id="RHEA-COMP:9584"/>
        <dbReference type="Rhea" id="RHEA-COMP:9587"/>
        <dbReference type="ChEBI" id="CHEBI:15378"/>
        <dbReference type="ChEBI" id="CHEBI:15444"/>
        <dbReference type="ChEBI" id="CHEBI:57498"/>
        <dbReference type="ChEBI" id="CHEBI:456216"/>
        <dbReference type="EC" id="2.4.1.21"/>
    </reaction>
</comment>
<comment type="pathway">
    <text evidence="1">Glycan biosynthesis; glycogen biosynthesis.</text>
</comment>
<comment type="similarity">
    <text evidence="1">Belongs to the glycosyltransferase 1 family. Bacterial/plant glycogen synthase subfamily.</text>
</comment>
<keyword id="KW-0320">Glycogen biosynthesis</keyword>
<keyword id="KW-0328">Glycosyltransferase</keyword>
<keyword id="KW-1185">Reference proteome</keyword>
<keyword id="KW-0808">Transferase</keyword>
<proteinExistence type="inferred from homology"/>
<organism>
    <name type="scientific">Pasteurella multocida (strain Pm70)</name>
    <dbReference type="NCBI Taxonomy" id="272843"/>
    <lineage>
        <taxon>Bacteria</taxon>
        <taxon>Pseudomonadati</taxon>
        <taxon>Pseudomonadota</taxon>
        <taxon>Gammaproteobacteria</taxon>
        <taxon>Pasteurellales</taxon>
        <taxon>Pasteurellaceae</taxon>
        <taxon>Pasteurella</taxon>
    </lineage>
</organism>